<sequence>MLKRFFLLLSSLLLVCNVQAGLFNNKPQYLTAAEAFIFSSSQQDGQLQLHWQIADGYYLYQKEIQLSAQNATLGDVTFPTAEKYQDEFFGEVAIFRDQLKLPVKLTDLKENPSLKIRYQGCTKGFCYPPETVVIPLNPSLQGNNSANSAALPSTIATPNAPQTELAENLSNNYLSIFGFLLLGIGLAFTPCVLPMLPLLSAIVIGHKNRPNTSRALLLSFTYVQGMALTYTLLGLTVAAIGLPFQVALQSPAVLISLAVLFTLLAASMFGLFEIRLPNTWQQKLNALSQQQQGGAVGNVFIMGIIAGLVASPCTSAPLSGALLYVAQSGNLLIGGLALYLLALGMGLPLILITVFGNQILPKSGEWLFKVKTAFGFVMLALPIFLISRILPSHYEPFLWSTLALAFLGWLISSLNYSTMLKQAVRILLFIAFGLTAYPWANLVWQTTSNTAQPTTPHLAMEKITSLTELEQKLTAYQGKKVMLDLYADWCVACKEFEKYTFTDPQVQQQLATMAVLQIDMTKNSAENTALMKHFNVLGLPTILFFDENGHEMTNVRITGFLTANQFLAWLNRL</sequence>
<comment type="function">
    <text evidence="2">Required to facilitate the formation of correct disulfide bonds in some periplasmic proteins and for the assembly of the periplasmic c-type cytochromes. Acts by transferring electrons from cytoplasmic thioredoxin to the periplasm. This transfer involves a cascade of disulfide bond formation and reduction steps.</text>
</comment>
<comment type="catalytic activity">
    <reaction evidence="2">
        <text>[protein]-dithiol + NAD(+) = [protein]-disulfide + NADH + H(+)</text>
        <dbReference type="Rhea" id="RHEA:18749"/>
        <dbReference type="Rhea" id="RHEA-COMP:10593"/>
        <dbReference type="Rhea" id="RHEA-COMP:10594"/>
        <dbReference type="ChEBI" id="CHEBI:15378"/>
        <dbReference type="ChEBI" id="CHEBI:29950"/>
        <dbReference type="ChEBI" id="CHEBI:50058"/>
        <dbReference type="ChEBI" id="CHEBI:57540"/>
        <dbReference type="ChEBI" id="CHEBI:57945"/>
        <dbReference type="EC" id="1.8.1.8"/>
    </reaction>
</comment>
<comment type="catalytic activity">
    <reaction evidence="2">
        <text>[protein]-dithiol + NADP(+) = [protein]-disulfide + NADPH + H(+)</text>
        <dbReference type="Rhea" id="RHEA:18753"/>
        <dbReference type="Rhea" id="RHEA-COMP:10593"/>
        <dbReference type="Rhea" id="RHEA-COMP:10594"/>
        <dbReference type="ChEBI" id="CHEBI:15378"/>
        <dbReference type="ChEBI" id="CHEBI:29950"/>
        <dbReference type="ChEBI" id="CHEBI:50058"/>
        <dbReference type="ChEBI" id="CHEBI:57783"/>
        <dbReference type="ChEBI" id="CHEBI:58349"/>
        <dbReference type="EC" id="1.8.1.8"/>
    </reaction>
</comment>
<comment type="subcellular location">
    <subcellularLocation>
        <location evidence="2">Cell inner membrane</location>
        <topology evidence="2">Multi-pass membrane protein</topology>
    </subcellularLocation>
</comment>
<comment type="similarity">
    <text evidence="2">Belongs to the thioredoxin family. DsbD subfamily.</text>
</comment>
<name>DSBD_HAEDU</name>
<reference key="1">
    <citation type="submission" date="2003-06" db="EMBL/GenBank/DDBJ databases">
        <title>The complete genome sequence of Haemophilus ducreyi.</title>
        <authorList>
            <person name="Munson R.S. Jr."/>
            <person name="Ray W.C."/>
            <person name="Mahairas G."/>
            <person name="Sabo P."/>
            <person name="Mungur R."/>
            <person name="Johnson L."/>
            <person name="Nguyen D."/>
            <person name="Wang J."/>
            <person name="Forst C."/>
            <person name="Hood L."/>
        </authorList>
    </citation>
    <scope>NUCLEOTIDE SEQUENCE [LARGE SCALE GENOMIC DNA]</scope>
    <source>
        <strain>35000HP / ATCC 700724</strain>
    </source>
</reference>
<proteinExistence type="inferred from homology"/>
<accession>Q7VMZ4</accession>
<evidence type="ECO:0000255" key="1"/>
<evidence type="ECO:0000255" key="2">
    <source>
        <dbReference type="HAMAP-Rule" id="MF_00399"/>
    </source>
</evidence>
<organism>
    <name type="scientific">Haemophilus ducreyi (strain 35000HP / ATCC 700724)</name>
    <dbReference type="NCBI Taxonomy" id="233412"/>
    <lineage>
        <taxon>Bacteria</taxon>
        <taxon>Pseudomonadati</taxon>
        <taxon>Pseudomonadota</taxon>
        <taxon>Gammaproteobacteria</taxon>
        <taxon>Pasteurellales</taxon>
        <taxon>Pasteurellaceae</taxon>
        <taxon>Haemophilus</taxon>
    </lineage>
</organism>
<feature type="signal peptide" evidence="2">
    <location>
        <begin position="1"/>
        <end position="20"/>
    </location>
</feature>
<feature type="chain" id="PRO_0000007375" description="Thiol:disulfide interchange protein DsbD">
    <location>
        <begin position="21"/>
        <end position="573"/>
    </location>
</feature>
<feature type="topological domain" description="Periplasmic" evidence="1">
    <location>
        <begin position="21"/>
        <end position="175"/>
    </location>
</feature>
<feature type="transmembrane region" description="Helical" evidence="2">
    <location>
        <begin position="176"/>
        <end position="196"/>
    </location>
</feature>
<feature type="topological domain" description="Cytoplasmic" evidence="1">
    <location>
        <begin position="197"/>
        <end position="227"/>
    </location>
</feature>
<feature type="transmembrane region" description="Helical" evidence="2">
    <location>
        <begin position="228"/>
        <end position="248"/>
    </location>
</feature>
<feature type="topological domain" description="Periplasmic" evidence="1">
    <location>
        <begin position="249"/>
        <end position="251"/>
    </location>
</feature>
<feature type="transmembrane region" description="Helical" evidence="2">
    <location>
        <begin position="252"/>
        <end position="272"/>
    </location>
</feature>
<feature type="topological domain" description="Cytoplasmic" evidence="1">
    <location>
        <begin position="273"/>
        <end position="292"/>
    </location>
</feature>
<feature type="transmembrane region" description="Helical" evidence="2">
    <location>
        <begin position="293"/>
        <end position="313"/>
    </location>
</feature>
<feature type="topological domain" description="Periplasmic" evidence="1">
    <location>
        <begin position="314"/>
        <end position="331"/>
    </location>
</feature>
<feature type="transmembrane region" description="Helical" evidence="2">
    <location>
        <begin position="332"/>
        <end position="352"/>
    </location>
</feature>
<feature type="topological domain" description="Cytoplasmic" evidence="1">
    <location>
        <begin position="353"/>
        <end position="365"/>
    </location>
</feature>
<feature type="transmembrane region" description="Helical" evidence="2">
    <location>
        <begin position="366"/>
        <end position="386"/>
    </location>
</feature>
<feature type="topological domain" description="Periplasmic" evidence="1">
    <location>
        <begin position="387"/>
        <end position="393"/>
    </location>
</feature>
<feature type="transmembrane region" description="Helical" evidence="2">
    <location>
        <begin position="394"/>
        <end position="414"/>
    </location>
</feature>
<feature type="topological domain" description="Cytoplasmic" evidence="1">
    <location>
        <begin position="415"/>
        <end position="425"/>
    </location>
</feature>
<feature type="transmembrane region" description="Helical" evidence="2">
    <location>
        <begin position="426"/>
        <end position="446"/>
    </location>
</feature>
<feature type="topological domain" description="Periplasmic" evidence="1">
    <location>
        <begin position="447"/>
        <end position="573"/>
    </location>
</feature>
<feature type="domain" description="Thioredoxin" evidence="2">
    <location>
        <begin position="440"/>
        <end position="573"/>
    </location>
</feature>
<feature type="disulfide bond" description="Redox-active" evidence="2">
    <location>
        <begin position="121"/>
        <end position="126"/>
    </location>
</feature>
<feature type="disulfide bond" description="Redox-active" evidence="2">
    <location>
        <begin position="191"/>
        <end position="313"/>
    </location>
</feature>
<feature type="disulfide bond" description="Redox-active" evidence="2">
    <location>
        <begin position="490"/>
        <end position="493"/>
    </location>
</feature>
<protein>
    <recommendedName>
        <fullName evidence="2">Thiol:disulfide interchange protein DsbD</fullName>
        <ecNumber evidence="2">1.8.1.8</ecNumber>
    </recommendedName>
    <alternativeName>
        <fullName evidence="2">Protein-disulfide reductase</fullName>
        <shortName evidence="2">Disulfide reductase</shortName>
    </alternativeName>
</protein>
<dbReference type="EC" id="1.8.1.8" evidence="2"/>
<dbReference type="EMBL" id="AE017143">
    <property type="protein sequence ID" value="AAP95707.1"/>
    <property type="molecule type" value="Genomic_DNA"/>
</dbReference>
<dbReference type="RefSeq" id="WP_010944757.1">
    <property type="nucleotide sequence ID" value="NC_002940.2"/>
</dbReference>
<dbReference type="SMR" id="Q7VMZ4"/>
<dbReference type="STRING" id="233412.HD_0807"/>
<dbReference type="KEGG" id="hdu:HD_0807"/>
<dbReference type="eggNOG" id="COG4232">
    <property type="taxonomic scope" value="Bacteria"/>
</dbReference>
<dbReference type="HOGENOM" id="CLU_014657_3_0_6"/>
<dbReference type="OrthoDB" id="9811036at2"/>
<dbReference type="Proteomes" id="UP000001022">
    <property type="component" value="Chromosome"/>
</dbReference>
<dbReference type="GO" id="GO:0005886">
    <property type="term" value="C:plasma membrane"/>
    <property type="evidence" value="ECO:0007669"/>
    <property type="project" value="UniProtKB-SubCell"/>
</dbReference>
<dbReference type="GO" id="GO:0009055">
    <property type="term" value="F:electron transfer activity"/>
    <property type="evidence" value="ECO:0007669"/>
    <property type="project" value="UniProtKB-UniRule"/>
</dbReference>
<dbReference type="GO" id="GO:0047134">
    <property type="term" value="F:protein-disulfide reductase [NAD(P)H] activity"/>
    <property type="evidence" value="ECO:0007669"/>
    <property type="project" value="UniProtKB-UniRule"/>
</dbReference>
<dbReference type="GO" id="GO:0045454">
    <property type="term" value="P:cell redox homeostasis"/>
    <property type="evidence" value="ECO:0007669"/>
    <property type="project" value="TreeGrafter"/>
</dbReference>
<dbReference type="GO" id="GO:0017004">
    <property type="term" value="P:cytochrome complex assembly"/>
    <property type="evidence" value="ECO:0007669"/>
    <property type="project" value="UniProtKB-UniRule"/>
</dbReference>
<dbReference type="CDD" id="cd02953">
    <property type="entry name" value="DsbDgamma"/>
    <property type="match status" value="1"/>
</dbReference>
<dbReference type="FunFam" id="3.40.30.10:FF:000116">
    <property type="entry name" value="Thiol:disulfide interchange protein DsbD"/>
    <property type="match status" value="1"/>
</dbReference>
<dbReference type="Gene3D" id="3.40.30.10">
    <property type="entry name" value="Glutaredoxin"/>
    <property type="match status" value="1"/>
</dbReference>
<dbReference type="Gene3D" id="2.60.40.1250">
    <property type="entry name" value="Thiol:disulfide interchange protein DsbD, N-terminal domain"/>
    <property type="match status" value="1"/>
</dbReference>
<dbReference type="HAMAP" id="MF_00399">
    <property type="entry name" value="DbsD"/>
    <property type="match status" value="1"/>
</dbReference>
<dbReference type="InterPro" id="IPR003834">
    <property type="entry name" value="Cyt_c_assmbl_TM_dom"/>
</dbReference>
<dbReference type="InterPro" id="IPR035671">
    <property type="entry name" value="DsbD_gamma"/>
</dbReference>
<dbReference type="InterPro" id="IPR028250">
    <property type="entry name" value="DsbDN"/>
</dbReference>
<dbReference type="InterPro" id="IPR036929">
    <property type="entry name" value="DsbDN_sf"/>
</dbReference>
<dbReference type="InterPro" id="IPR022910">
    <property type="entry name" value="Thiol_diS_interchange_DbsD"/>
</dbReference>
<dbReference type="InterPro" id="IPR012336">
    <property type="entry name" value="Thioredoxin-like_fold"/>
</dbReference>
<dbReference type="InterPro" id="IPR036249">
    <property type="entry name" value="Thioredoxin-like_sf"/>
</dbReference>
<dbReference type="InterPro" id="IPR017937">
    <property type="entry name" value="Thioredoxin_CS"/>
</dbReference>
<dbReference type="InterPro" id="IPR013766">
    <property type="entry name" value="Thioredoxin_domain"/>
</dbReference>
<dbReference type="NCBIfam" id="NF001419">
    <property type="entry name" value="PRK00293.1"/>
    <property type="match status" value="1"/>
</dbReference>
<dbReference type="PANTHER" id="PTHR32234">
    <property type="entry name" value="THIOL:DISULFIDE INTERCHANGE PROTEIN DSBD"/>
    <property type="match status" value="1"/>
</dbReference>
<dbReference type="PANTHER" id="PTHR32234:SF0">
    <property type="entry name" value="THIOL:DISULFIDE INTERCHANGE PROTEIN DSBD"/>
    <property type="match status" value="1"/>
</dbReference>
<dbReference type="Pfam" id="PF11412">
    <property type="entry name" value="DsbD_N"/>
    <property type="match status" value="1"/>
</dbReference>
<dbReference type="Pfam" id="PF02683">
    <property type="entry name" value="DsbD_TM"/>
    <property type="match status" value="1"/>
</dbReference>
<dbReference type="Pfam" id="PF13098">
    <property type="entry name" value="Thioredoxin_2"/>
    <property type="match status" value="1"/>
</dbReference>
<dbReference type="SUPFAM" id="SSF74863">
    <property type="entry name" value="Thiol:disulfide interchange protein DsbD, N-terminal domain (DsbD-alpha)"/>
    <property type="match status" value="1"/>
</dbReference>
<dbReference type="SUPFAM" id="SSF52833">
    <property type="entry name" value="Thioredoxin-like"/>
    <property type="match status" value="1"/>
</dbReference>
<dbReference type="PROSITE" id="PS00194">
    <property type="entry name" value="THIOREDOXIN_1"/>
    <property type="match status" value="1"/>
</dbReference>
<dbReference type="PROSITE" id="PS51352">
    <property type="entry name" value="THIOREDOXIN_2"/>
    <property type="match status" value="1"/>
</dbReference>
<gene>
    <name evidence="2" type="primary">dsbD</name>
    <name type="ordered locus">HD_0807</name>
</gene>
<keyword id="KW-0997">Cell inner membrane</keyword>
<keyword id="KW-1003">Cell membrane</keyword>
<keyword id="KW-0201">Cytochrome c-type biogenesis</keyword>
<keyword id="KW-1015">Disulfide bond</keyword>
<keyword id="KW-0249">Electron transport</keyword>
<keyword id="KW-0472">Membrane</keyword>
<keyword id="KW-0520">NAD</keyword>
<keyword id="KW-0560">Oxidoreductase</keyword>
<keyword id="KW-0676">Redox-active center</keyword>
<keyword id="KW-1185">Reference proteome</keyword>
<keyword id="KW-0732">Signal</keyword>
<keyword id="KW-0812">Transmembrane</keyword>
<keyword id="KW-1133">Transmembrane helix</keyword>
<keyword id="KW-0813">Transport</keyword>